<protein>
    <recommendedName>
        <fullName evidence="1">Enolase</fullName>
        <ecNumber evidence="1">4.2.1.11</ecNumber>
    </recommendedName>
    <alternativeName>
        <fullName evidence="1">2-phospho-D-glycerate hydro-lyase</fullName>
    </alternativeName>
    <alternativeName>
        <fullName evidence="1">2-phosphoglycerate dehydratase</fullName>
    </alternativeName>
</protein>
<sequence>MSTIIDVYAREVLDSRGNPTVEVEVYTESGAFGRAIVPSGASTGEHEAVELRDGDKSRYLGKGVLNAVNNVNEAIAPEIVGFDVTDQAGIDRAMIELDGTPNKGKLGANAILGVSMAVAHAAADFVGLPLYRYLGGFNAKQLPTPMMNIINGGSHADNNVDFQEFMILPVGAPTFKESIRMGAEVFHALKAVLHDKGLNTAVGDEGGFAPNLGSNREALEVIIEAIEKAGYKAGENVFLGMDVASSEFYNKETGKYDLAGEGRTGLTSAEMVDFYEELCKDFPIISIEDGLDENDWDGHKLLTERIGDKVQLVGDDLFVTNTQKLAEGIEKGISNSILIKVNQIGTLTETFEAIEMAKRAGYTAVVSHRSGETEDATIADIAVATNAGQIKTGSMSRTDRIAKYNQLLRIEDELGEIAVYDGIKSFYNIKR</sequence>
<dbReference type="EC" id="4.2.1.11" evidence="1"/>
<dbReference type="EMBL" id="CP000903">
    <property type="protein sequence ID" value="ABY46075.1"/>
    <property type="molecule type" value="Genomic_DNA"/>
</dbReference>
<dbReference type="RefSeq" id="WP_000103948.1">
    <property type="nucleotide sequence ID" value="NC_010184.1"/>
</dbReference>
<dbReference type="SMR" id="A9VQ48"/>
<dbReference type="GeneID" id="92802664"/>
<dbReference type="KEGG" id="bwe:BcerKBAB4_4927"/>
<dbReference type="eggNOG" id="COG0148">
    <property type="taxonomic scope" value="Bacteria"/>
</dbReference>
<dbReference type="HOGENOM" id="CLU_031223_2_1_9"/>
<dbReference type="UniPathway" id="UPA00109">
    <property type="reaction ID" value="UER00187"/>
</dbReference>
<dbReference type="Proteomes" id="UP000002154">
    <property type="component" value="Chromosome"/>
</dbReference>
<dbReference type="GO" id="GO:0009986">
    <property type="term" value="C:cell surface"/>
    <property type="evidence" value="ECO:0007669"/>
    <property type="project" value="UniProtKB-SubCell"/>
</dbReference>
<dbReference type="GO" id="GO:0005576">
    <property type="term" value="C:extracellular region"/>
    <property type="evidence" value="ECO:0007669"/>
    <property type="project" value="UniProtKB-SubCell"/>
</dbReference>
<dbReference type="GO" id="GO:0000015">
    <property type="term" value="C:phosphopyruvate hydratase complex"/>
    <property type="evidence" value="ECO:0007669"/>
    <property type="project" value="InterPro"/>
</dbReference>
<dbReference type="GO" id="GO:0000287">
    <property type="term" value="F:magnesium ion binding"/>
    <property type="evidence" value="ECO:0007669"/>
    <property type="project" value="UniProtKB-UniRule"/>
</dbReference>
<dbReference type="GO" id="GO:0004634">
    <property type="term" value="F:phosphopyruvate hydratase activity"/>
    <property type="evidence" value="ECO:0007669"/>
    <property type="project" value="UniProtKB-UniRule"/>
</dbReference>
<dbReference type="GO" id="GO:0006096">
    <property type="term" value="P:glycolytic process"/>
    <property type="evidence" value="ECO:0007669"/>
    <property type="project" value="UniProtKB-UniRule"/>
</dbReference>
<dbReference type="CDD" id="cd03313">
    <property type="entry name" value="enolase"/>
    <property type="match status" value="1"/>
</dbReference>
<dbReference type="FunFam" id="3.20.20.120:FF:000001">
    <property type="entry name" value="Enolase"/>
    <property type="match status" value="1"/>
</dbReference>
<dbReference type="FunFam" id="3.30.390.10:FF:000001">
    <property type="entry name" value="Enolase"/>
    <property type="match status" value="1"/>
</dbReference>
<dbReference type="Gene3D" id="3.20.20.120">
    <property type="entry name" value="Enolase-like C-terminal domain"/>
    <property type="match status" value="1"/>
</dbReference>
<dbReference type="Gene3D" id="3.30.390.10">
    <property type="entry name" value="Enolase-like, N-terminal domain"/>
    <property type="match status" value="1"/>
</dbReference>
<dbReference type="HAMAP" id="MF_00318">
    <property type="entry name" value="Enolase"/>
    <property type="match status" value="1"/>
</dbReference>
<dbReference type="InterPro" id="IPR000941">
    <property type="entry name" value="Enolase"/>
</dbReference>
<dbReference type="InterPro" id="IPR036849">
    <property type="entry name" value="Enolase-like_C_sf"/>
</dbReference>
<dbReference type="InterPro" id="IPR029017">
    <property type="entry name" value="Enolase-like_N"/>
</dbReference>
<dbReference type="InterPro" id="IPR020810">
    <property type="entry name" value="Enolase_C"/>
</dbReference>
<dbReference type="InterPro" id="IPR020809">
    <property type="entry name" value="Enolase_CS"/>
</dbReference>
<dbReference type="InterPro" id="IPR020811">
    <property type="entry name" value="Enolase_N"/>
</dbReference>
<dbReference type="NCBIfam" id="TIGR01060">
    <property type="entry name" value="eno"/>
    <property type="match status" value="1"/>
</dbReference>
<dbReference type="PANTHER" id="PTHR11902">
    <property type="entry name" value="ENOLASE"/>
    <property type="match status" value="1"/>
</dbReference>
<dbReference type="PANTHER" id="PTHR11902:SF1">
    <property type="entry name" value="ENOLASE"/>
    <property type="match status" value="1"/>
</dbReference>
<dbReference type="Pfam" id="PF00113">
    <property type="entry name" value="Enolase_C"/>
    <property type="match status" value="1"/>
</dbReference>
<dbReference type="Pfam" id="PF03952">
    <property type="entry name" value="Enolase_N"/>
    <property type="match status" value="1"/>
</dbReference>
<dbReference type="PIRSF" id="PIRSF001400">
    <property type="entry name" value="Enolase"/>
    <property type="match status" value="1"/>
</dbReference>
<dbReference type="PRINTS" id="PR00148">
    <property type="entry name" value="ENOLASE"/>
</dbReference>
<dbReference type="SFLD" id="SFLDF00002">
    <property type="entry name" value="enolase"/>
    <property type="match status" value="1"/>
</dbReference>
<dbReference type="SFLD" id="SFLDG00178">
    <property type="entry name" value="enolase"/>
    <property type="match status" value="1"/>
</dbReference>
<dbReference type="SMART" id="SM01192">
    <property type="entry name" value="Enolase_C"/>
    <property type="match status" value="1"/>
</dbReference>
<dbReference type="SMART" id="SM01193">
    <property type="entry name" value="Enolase_N"/>
    <property type="match status" value="1"/>
</dbReference>
<dbReference type="SUPFAM" id="SSF51604">
    <property type="entry name" value="Enolase C-terminal domain-like"/>
    <property type="match status" value="1"/>
</dbReference>
<dbReference type="SUPFAM" id="SSF54826">
    <property type="entry name" value="Enolase N-terminal domain-like"/>
    <property type="match status" value="1"/>
</dbReference>
<dbReference type="PROSITE" id="PS00164">
    <property type="entry name" value="ENOLASE"/>
    <property type="match status" value="1"/>
</dbReference>
<gene>
    <name evidence="1" type="primary">eno</name>
    <name type="ordered locus">BcerKBAB4_4927</name>
</gene>
<proteinExistence type="inferred from homology"/>
<name>ENO_BACMK</name>
<comment type="function">
    <text evidence="1">Catalyzes the reversible conversion of 2-phosphoglycerate (2-PG) into phosphoenolpyruvate (PEP). It is essential for the degradation of carbohydrates via glycolysis.</text>
</comment>
<comment type="catalytic activity">
    <reaction evidence="1">
        <text>(2R)-2-phosphoglycerate = phosphoenolpyruvate + H2O</text>
        <dbReference type="Rhea" id="RHEA:10164"/>
        <dbReference type="ChEBI" id="CHEBI:15377"/>
        <dbReference type="ChEBI" id="CHEBI:58289"/>
        <dbReference type="ChEBI" id="CHEBI:58702"/>
        <dbReference type="EC" id="4.2.1.11"/>
    </reaction>
</comment>
<comment type="cofactor">
    <cofactor evidence="1">
        <name>Mg(2+)</name>
        <dbReference type="ChEBI" id="CHEBI:18420"/>
    </cofactor>
    <text evidence="1">Binds a second Mg(2+) ion via substrate during catalysis.</text>
</comment>
<comment type="pathway">
    <text evidence="1">Carbohydrate degradation; glycolysis; pyruvate from D-glyceraldehyde 3-phosphate: step 4/5.</text>
</comment>
<comment type="subcellular location">
    <subcellularLocation>
        <location evidence="1">Cytoplasm</location>
    </subcellularLocation>
    <subcellularLocation>
        <location evidence="1">Secreted</location>
    </subcellularLocation>
    <subcellularLocation>
        <location evidence="1">Cell surface</location>
    </subcellularLocation>
    <text evidence="1">Fractions of enolase are present in both the cytoplasm and on the cell surface.</text>
</comment>
<comment type="similarity">
    <text evidence="1">Belongs to the enolase family.</text>
</comment>
<keyword id="KW-0963">Cytoplasm</keyword>
<keyword id="KW-0324">Glycolysis</keyword>
<keyword id="KW-0456">Lyase</keyword>
<keyword id="KW-0460">Magnesium</keyword>
<keyword id="KW-0479">Metal-binding</keyword>
<keyword id="KW-0964">Secreted</keyword>
<accession>A9VQ48</accession>
<feature type="chain" id="PRO_1000115828" description="Enolase">
    <location>
        <begin position="1"/>
        <end position="431"/>
    </location>
</feature>
<feature type="active site" description="Proton donor" evidence="1">
    <location>
        <position position="205"/>
    </location>
</feature>
<feature type="active site" description="Proton acceptor" evidence="1">
    <location>
        <position position="340"/>
    </location>
</feature>
<feature type="binding site" evidence="1">
    <location>
        <position position="163"/>
    </location>
    <ligand>
        <name>(2R)-2-phosphoglycerate</name>
        <dbReference type="ChEBI" id="CHEBI:58289"/>
    </ligand>
</feature>
<feature type="binding site" evidence="1">
    <location>
        <position position="242"/>
    </location>
    <ligand>
        <name>Mg(2+)</name>
        <dbReference type="ChEBI" id="CHEBI:18420"/>
    </ligand>
</feature>
<feature type="binding site" evidence="1">
    <location>
        <position position="288"/>
    </location>
    <ligand>
        <name>Mg(2+)</name>
        <dbReference type="ChEBI" id="CHEBI:18420"/>
    </ligand>
</feature>
<feature type="binding site" evidence="1">
    <location>
        <position position="315"/>
    </location>
    <ligand>
        <name>Mg(2+)</name>
        <dbReference type="ChEBI" id="CHEBI:18420"/>
    </ligand>
</feature>
<feature type="binding site" evidence="1">
    <location>
        <position position="340"/>
    </location>
    <ligand>
        <name>(2R)-2-phosphoglycerate</name>
        <dbReference type="ChEBI" id="CHEBI:58289"/>
    </ligand>
</feature>
<feature type="binding site" evidence="1">
    <location>
        <position position="369"/>
    </location>
    <ligand>
        <name>(2R)-2-phosphoglycerate</name>
        <dbReference type="ChEBI" id="CHEBI:58289"/>
    </ligand>
</feature>
<feature type="binding site" evidence="1">
    <location>
        <position position="370"/>
    </location>
    <ligand>
        <name>(2R)-2-phosphoglycerate</name>
        <dbReference type="ChEBI" id="CHEBI:58289"/>
    </ligand>
</feature>
<feature type="binding site" evidence="1">
    <location>
        <position position="391"/>
    </location>
    <ligand>
        <name>(2R)-2-phosphoglycerate</name>
        <dbReference type="ChEBI" id="CHEBI:58289"/>
    </ligand>
</feature>
<organism>
    <name type="scientific">Bacillus mycoides (strain KBAB4)</name>
    <name type="common">Bacillus weihenstephanensis</name>
    <dbReference type="NCBI Taxonomy" id="315730"/>
    <lineage>
        <taxon>Bacteria</taxon>
        <taxon>Bacillati</taxon>
        <taxon>Bacillota</taxon>
        <taxon>Bacilli</taxon>
        <taxon>Bacillales</taxon>
        <taxon>Bacillaceae</taxon>
        <taxon>Bacillus</taxon>
        <taxon>Bacillus cereus group</taxon>
    </lineage>
</organism>
<reference key="1">
    <citation type="journal article" date="2008" name="Chem. Biol. Interact.">
        <title>Extending the Bacillus cereus group genomics to putative food-borne pathogens of different toxicity.</title>
        <authorList>
            <person name="Lapidus A."/>
            <person name="Goltsman E."/>
            <person name="Auger S."/>
            <person name="Galleron N."/>
            <person name="Segurens B."/>
            <person name="Dossat C."/>
            <person name="Land M.L."/>
            <person name="Broussolle V."/>
            <person name="Brillard J."/>
            <person name="Guinebretiere M.-H."/>
            <person name="Sanchis V."/>
            <person name="Nguen-the C."/>
            <person name="Lereclus D."/>
            <person name="Richardson P."/>
            <person name="Wincker P."/>
            <person name="Weissenbach J."/>
            <person name="Ehrlich S.D."/>
            <person name="Sorokin A."/>
        </authorList>
    </citation>
    <scope>NUCLEOTIDE SEQUENCE [LARGE SCALE GENOMIC DNA]</scope>
    <source>
        <strain>KBAB4</strain>
    </source>
</reference>
<evidence type="ECO:0000255" key="1">
    <source>
        <dbReference type="HAMAP-Rule" id="MF_00318"/>
    </source>
</evidence>